<feature type="chain" id="PRO_0000062960" description="Heat shock protein 90">
    <location>
        <begin position="1"/>
        <end position="706"/>
    </location>
</feature>
<feature type="region of interest" description="Disordered" evidence="2">
    <location>
        <begin position="214"/>
        <end position="261"/>
    </location>
</feature>
<feature type="region of interest" description="Disordered" evidence="2">
    <location>
        <begin position="679"/>
        <end position="706"/>
    </location>
</feature>
<feature type="short sequence motif" description="TPR repeat-binding">
    <location>
        <begin position="702"/>
        <end position="706"/>
    </location>
</feature>
<feature type="compositionally biased region" description="Acidic residues" evidence="2">
    <location>
        <begin position="217"/>
        <end position="231"/>
    </location>
</feature>
<feature type="compositionally biased region" description="Low complexity" evidence="2">
    <location>
        <begin position="689"/>
        <end position="700"/>
    </location>
</feature>
<feature type="binding site" evidence="1">
    <location>
        <position position="37"/>
    </location>
    <ligand>
        <name>ATP</name>
        <dbReference type="ChEBI" id="CHEBI:30616"/>
    </ligand>
</feature>
<feature type="binding site" evidence="1">
    <location>
        <position position="79"/>
    </location>
    <ligand>
        <name>ATP</name>
        <dbReference type="ChEBI" id="CHEBI:30616"/>
    </ligand>
</feature>
<feature type="binding site" evidence="1">
    <location>
        <position position="124"/>
    </location>
    <ligand>
        <name>ATP</name>
        <dbReference type="ChEBI" id="CHEBI:30616"/>
    </ligand>
</feature>
<feature type="binding site" evidence="1">
    <location>
        <position position="377"/>
    </location>
    <ligand>
        <name>ATP</name>
        <dbReference type="ChEBI" id="CHEBI:30616"/>
    </ligand>
</feature>
<reference key="1">
    <citation type="journal article" date="2005" name="Nature">
        <title>Genomic sequence of the pathogenic and allergenic filamentous fungus Aspergillus fumigatus.</title>
        <authorList>
            <person name="Nierman W.C."/>
            <person name="Pain A."/>
            <person name="Anderson M.J."/>
            <person name="Wortman J.R."/>
            <person name="Kim H.S."/>
            <person name="Arroyo J."/>
            <person name="Berriman M."/>
            <person name="Abe K."/>
            <person name="Archer D.B."/>
            <person name="Bermejo C."/>
            <person name="Bennett J.W."/>
            <person name="Bowyer P."/>
            <person name="Chen D."/>
            <person name="Collins M."/>
            <person name="Coulsen R."/>
            <person name="Davies R."/>
            <person name="Dyer P.S."/>
            <person name="Farman M.L."/>
            <person name="Fedorova N."/>
            <person name="Fedorova N.D."/>
            <person name="Feldblyum T.V."/>
            <person name="Fischer R."/>
            <person name="Fosker N."/>
            <person name="Fraser A."/>
            <person name="Garcia J.L."/>
            <person name="Garcia M.J."/>
            <person name="Goble A."/>
            <person name="Goldman G.H."/>
            <person name="Gomi K."/>
            <person name="Griffith-Jones S."/>
            <person name="Gwilliam R."/>
            <person name="Haas B.J."/>
            <person name="Haas H."/>
            <person name="Harris D.E."/>
            <person name="Horiuchi H."/>
            <person name="Huang J."/>
            <person name="Humphray S."/>
            <person name="Jimenez J."/>
            <person name="Keller N."/>
            <person name="Khouri H."/>
            <person name="Kitamoto K."/>
            <person name="Kobayashi T."/>
            <person name="Konzack S."/>
            <person name="Kulkarni R."/>
            <person name="Kumagai T."/>
            <person name="Lafton A."/>
            <person name="Latge J.-P."/>
            <person name="Li W."/>
            <person name="Lord A."/>
            <person name="Lu C."/>
            <person name="Majoros W.H."/>
            <person name="May G.S."/>
            <person name="Miller B.L."/>
            <person name="Mohamoud Y."/>
            <person name="Molina M."/>
            <person name="Monod M."/>
            <person name="Mouyna I."/>
            <person name="Mulligan S."/>
            <person name="Murphy L.D."/>
            <person name="O'Neil S."/>
            <person name="Paulsen I."/>
            <person name="Penalva M.A."/>
            <person name="Pertea M."/>
            <person name="Price C."/>
            <person name="Pritchard B.L."/>
            <person name="Quail M.A."/>
            <person name="Rabbinowitsch E."/>
            <person name="Rawlins N."/>
            <person name="Rajandream M.A."/>
            <person name="Reichard U."/>
            <person name="Renauld H."/>
            <person name="Robson G.D."/>
            <person name="Rodriguez de Cordoba S."/>
            <person name="Rodriguez-Pena J.M."/>
            <person name="Ronning C.M."/>
            <person name="Rutter S."/>
            <person name="Salzberg S.L."/>
            <person name="Sanchez M."/>
            <person name="Sanchez-Ferrero J.C."/>
            <person name="Saunders D."/>
            <person name="Seeger K."/>
            <person name="Squares R."/>
            <person name="Squares S."/>
            <person name="Takeuchi M."/>
            <person name="Tekaia F."/>
            <person name="Turner G."/>
            <person name="Vazquez de Aldana C.R."/>
            <person name="Weidman J."/>
            <person name="White O."/>
            <person name="Woodward J.R."/>
            <person name="Yu J.-H."/>
            <person name="Fraser C.M."/>
            <person name="Galagan J.E."/>
            <person name="Asai K."/>
            <person name="Machida M."/>
            <person name="Hall N."/>
            <person name="Barrell B.G."/>
            <person name="Denning D.W."/>
        </authorList>
    </citation>
    <scope>NUCLEOTIDE SEQUENCE [LARGE SCALE GENOMIC DNA]</scope>
    <source>
        <strain>ATCC MYA-4609 / CBS 101355 / FGSC A1100 / Af293</strain>
    </source>
</reference>
<reference key="2">
    <citation type="submission" date="1997-03" db="EMBL/GenBank/DDBJ databases">
        <authorList>
            <person name="Kurup V.P."/>
            <person name="Banerjee B."/>
        </authorList>
    </citation>
    <scope>NUCLEOTIDE SEQUENCE [MRNA] OF 266-706</scope>
</reference>
<reference key="3">
    <citation type="journal article" date="1993" name="J. Allergy Clin. Immunol.">
        <title>Isolation and characterization of a recombinant heat shock protein of Aspergillus fumigatus.</title>
        <authorList>
            <person name="Kumar A."/>
            <person name="Reddy L.V."/>
            <person name="Sochanik A."/>
            <person name="Kurup V.P."/>
        </authorList>
    </citation>
    <scope>NUCLEOTIDE SEQUENCE [MRNA] OF 430-549</scope>
    <source>
        <strain>ATCC 42202 / AF-102 / Ag 507</strain>
    </source>
</reference>
<proteinExistence type="evidence at protein level"/>
<comment type="function">
    <text evidence="1">Molecular chaperone that promotes the maturation, structural maintenance and proper regulation of specific target proteins involved for instance in cell cycle control and signal transduction. Undergoes a functional cycle that is linked to its ATPase activity. This cycle probably induces conformational changes in the client proteins, thereby causing their activation. Interacts dynamically with various co-chaperones that modulate its substrate recognition, ATPase cycle and chaperone function (By similarity).</text>
</comment>
<comment type="subunit">
    <text evidence="1">Homodimer.</text>
</comment>
<comment type="subcellular location">
    <subcellularLocation>
        <location evidence="1">Cytoplasm</location>
    </subcellularLocation>
</comment>
<comment type="domain">
    <text evidence="1">The TPR repeat-binding motif mediates interaction with TPR repeat-containing proteins.</text>
</comment>
<comment type="allergen">
    <text>Causes an allergic reaction in human.</text>
</comment>
<comment type="similarity">
    <text evidence="3">Belongs to the heat shock protein 90 family.</text>
</comment>
<organism>
    <name type="scientific">Aspergillus fumigatus (strain ATCC MYA-4609 / CBS 101355 / FGSC A1100 / Af293)</name>
    <name type="common">Neosartorya fumigata</name>
    <dbReference type="NCBI Taxonomy" id="330879"/>
    <lineage>
        <taxon>Eukaryota</taxon>
        <taxon>Fungi</taxon>
        <taxon>Dikarya</taxon>
        <taxon>Ascomycota</taxon>
        <taxon>Pezizomycotina</taxon>
        <taxon>Eurotiomycetes</taxon>
        <taxon>Eurotiomycetidae</taxon>
        <taxon>Eurotiales</taxon>
        <taxon>Aspergillaceae</taxon>
        <taxon>Aspergillus</taxon>
        <taxon>Aspergillus subgen. Fumigati</taxon>
    </lineage>
</organism>
<accession>P40292</accession>
<accession>Q4WET9</accession>
<protein>
    <recommendedName>
        <fullName>Heat shock protein 90</fullName>
    </recommendedName>
    <alternativeName>
        <fullName>65 kDa IgE-binding protein</fullName>
    </alternativeName>
    <alternativeName>
        <fullName>Heat shock protein hsp1</fullName>
    </alternativeName>
    <allergenName>Asp f 12</allergenName>
</protein>
<evidence type="ECO:0000250" key="1"/>
<evidence type="ECO:0000256" key="2">
    <source>
        <dbReference type="SAM" id="MobiDB-lite"/>
    </source>
</evidence>
<evidence type="ECO:0000305" key="3"/>
<dbReference type="EMBL" id="AAHF01000011">
    <property type="protein sequence ID" value="EAL85888.1"/>
    <property type="molecule type" value="Genomic_DNA"/>
</dbReference>
<dbReference type="EMBL" id="U92465">
    <property type="protein sequence ID" value="AAB51544.1"/>
    <property type="molecule type" value="mRNA"/>
</dbReference>
<dbReference type="RefSeq" id="XP_747926.1">
    <property type="nucleotide sequence ID" value="XM_742833.1"/>
</dbReference>
<dbReference type="SMR" id="P40292"/>
<dbReference type="FunCoup" id="P40292">
    <property type="interactions" value="1405"/>
</dbReference>
<dbReference type="STRING" id="330879.P40292"/>
<dbReference type="Allergome" id="3110">
    <property type="allergen name" value="Asp f 12.0101"/>
</dbReference>
<dbReference type="Allergome" id="65">
    <property type="allergen name" value="Asp f 12"/>
</dbReference>
<dbReference type="SwissPalm" id="P40292"/>
<dbReference type="EnsemblFungi" id="EAL85888">
    <property type="protein sequence ID" value="EAL85888"/>
    <property type="gene ID" value="AFUA_5G04170"/>
</dbReference>
<dbReference type="GeneID" id="3505604"/>
<dbReference type="KEGG" id="afm:AFUA_5G04170"/>
<dbReference type="VEuPathDB" id="FungiDB:Afu5g04170"/>
<dbReference type="eggNOG" id="KOG0019">
    <property type="taxonomic scope" value="Eukaryota"/>
</dbReference>
<dbReference type="HOGENOM" id="CLU_006684_1_3_1"/>
<dbReference type="InParanoid" id="P40292"/>
<dbReference type="OMA" id="MRRMKEM"/>
<dbReference type="OrthoDB" id="28737at2759"/>
<dbReference type="Proteomes" id="UP000002530">
    <property type="component" value="Chromosome 5"/>
</dbReference>
<dbReference type="GO" id="GO:0030428">
    <property type="term" value="C:cell septum"/>
    <property type="evidence" value="ECO:0000314"/>
    <property type="project" value="AspGD"/>
</dbReference>
<dbReference type="GO" id="GO:0005829">
    <property type="term" value="C:cytosol"/>
    <property type="evidence" value="ECO:0000314"/>
    <property type="project" value="AspGD"/>
</dbReference>
<dbReference type="GO" id="GO:0009277">
    <property type="term" value="C:fungal-type cell wall"/>
    <property type="evidence" value="ECO:0000314"/>
    <property type="project" value="AspGD"/>
</dbReference>
<dbReference type="GO" id="GO:0048471">
    <property type="term" value="C:perinuclear region of cytoplasm"/>
    <property type="evidence" value="ECO:0000318"/>
    <property type="project" value="GO_Central"/>
</dbReference>
<dbReference type="GO" id="GO:0005886">
    <property type="term" value="C:plasma membrane"/>
    <property type="evidence" value="ECO:0000318"/>
    <property type="project" value="GO_Central"/>
</dbReference>
<dbReference type="GO" id="GO:0032991">
    <property type="term" value="C:protein-containing complex"/>
    <property type="evidence" value="ECO:0000318"/>
    <property type="project" value="GO_Central"/>
</dbReference>
<dbReference type="GO" id="GO:0005524">
    <property type="term" value="F:ATP binding"/>
    <property type="evidence" value="ECO:0000318"/>
    <property type="project" value="GO_Central"/>
</dbReference>
<dbReference type="GO" id="GO:0016887">
    <property type="term" value="F:ATP hydrolysis activity"/>
    <property type="evidence" value="ECO:0000318"/>
    <property type="project" value="GO_Central"/>
</dbReference>
<dbReference type="GO" id="GO:0140662">
    <property type="term" value="F:ATP-dependent protein folding chaperone"/>
    <property type="evidence" value="ECO:0007669"/>
    <property type="project" value="InterPro"/>
</dbReference>
<dbReference type="GO" id="GO:0051082">
    <property type="term" value="F:unfolded protein binding"/>
    <property type="evidence" value="ECO:0000318"/>
    <property type="project" value="GO_Central"/>
</dbReference>
<dbReference type="GO" id="GO:0034605">
    <property type="term" value="P:cellular response to heat"/>
    <property type="evidence" value="ECO:0000318"/>
    <property type="project" value="GO_Central"/>
</dbReference>
<dbReference type="GO" id="GO:0006457">
    <property type="term" value="P:protein folding"/>
    <property type="evidence" value="ECO:0000318"/>
    <property type="project" value="GO_Central"/>
</dbReference>
<dbReference type="GO" id="GO:0050821">
    <property type="term" value="P:protein stabilization"/>
    <property type="evidence" value="ECO:0000318"/>
    <property type="project" value="GO_Central"/>
</dbReference>
<dbReference type="CDD" id="cd16927">
    <property type="entry name" value="HATPase_Hsp90-like"/>
    <property type="match status" value="1"/>
</dbReference>
<dbReference type="FunFam" id="1.20.120.790:FF:000001">
    <property type="entry name" value="Heat shock protein 90 alpha"/>
    <property type="match status" value="1"/>
</dbReference>
<dbReference type="FunFam" id="3.30.230.80:FF:000001">
    <property type="entry name" value="Heat shock protein 90 alpha"/>
    <property type="match status" value="1"/>
</dbReference>
<dbReference type="FunFam" id="3.40.50.11260:FF:000001">
    <property type="entry name" value="Heat shock protein 90 alpha"/>
    <property type="match status" value="1"/>
</dbReference>
<dbReference type="FunFam" id="3.30.565.10:FF:000001">
    <property type="entry name" value="Heat shock protein HSP 90-alpha"/>
    <property type="match status" value="1"/>
</dbReference>
<dbReference type="Gene3D" id="3.30.230.80">
    <property type="match status" value="1"/>
</dbReference>
<dbReference type="Gene3D" id="3.40.50.11260">
    <property type="match status" value="1"/>
</dbReference>
<dbReference type="Gene3D" id="1.20.120.790">
    <property type="entry name" value="Heat shock protein 90, C-terminal domain"/>
    <property type="match status" value="1"/>
</dbReference>
<dbReference type="Gene3D" id="3.30.565.10">
    <property type="entry name" value="Histidine kinase-like ATPase, C-terminal domain"/>
    <property type="match status" value="1"/>
</dbReference>
<dbReference type="HAMAP" id="MF_00505">
    <property type="entry name" value="HSP90"/>
    <property type="match status" value="1"/>
</dbReference>
<dbReference type="InterPro" id="IPR036890">
    <property type="entry name" value="HATPase_C_sf"/>
</dbReference>
<dbReference type="InterPro" id="IPR019805">
    <property type="entry name" value="Heat_shock_protein_90_CS"/>
</dbReference>
<dbReference type="InterPro" id="IPR037196">
    <property type="entry name" value="HSP90_C"/>
</dbReference>
<dbReference type="InterPro" id="IPR001404">
    <property type="entry name" value="Hsp90_fam"/>
</dbReference>
<dbReference type="InterPro" id="IPR020575">
    <property type="entry name" value="Hsp90_N"/>
</dbReference>
<dbReference type="InterPro" id="IPR020568">
    <property type="entry name" value="Ribosomal_Su5_D2-typ_SF"/>
</dbReference>
<dbReference type="NCBIfam" id="NF003555">
    <property type="entry name" value="PRK05218.1"/>
    <property type="match status" value="1"/>
</dbReference>
<dbReference type="PANTHER" id="PTHR11528">
    <property type="entry name" value="HEAT SHOCK PROTEIN 90 FAMILY MEMBER"/>
    <property type="match status" value="1"/>
</dbReference>
<dbReference type="Pfam" id="PF13589">
    <property type="entry name" value="HATPase_c_3"/>
    <property type="match status" value="1"/>
</dbReference>
<dbReference type="Pfam" id="PF00183">
    <property type="entry name" value="HSP90"/>
    <property type="match status" value="1"/>
</dbReference>
<dbReference type="PIRSF" id="PIRSF002583">
    <property type="entry name" value="Hsp90"/>
    <property type="match status" value="1"/>
</dbReference>
<dbReference type="PRINTS" id="PR00775">
    <property type="entry name" value="HEATSHOCK90"/>
</dbReference>
<dbReference type="SMART" id="SM00387">
    <property type="entry name" value="HATPase_c"/>
    <property type="match status" value="1"/>
</dbReference>
<dbReference type="SUPFAM" id="SSF55874">
    <property type="entry name" value="ATPase domain of HSP90 chaperone/DNA topoisomerase II/histidine kinase"/>
    <property type="match status" value="1"/>
</dbReference>
<dbReference type="SUPFAM" id="SSF110942">
    <property type="entry name" value="HSP90 C-terminal domain"/>
    <property type="match status" value="1"/>
</dbReference>
<dbReference type="SUPFAM" id="SSF54211">
    <property type="entry name" value="Ribosomal protein S5 domain 2-like"/>
    <property type="match status" value="1"/>
</dbReference>
<dbReference type="PROSITE" id="PS00298">
    <property type="entry name" value="HSP90"/>
    <property type="match status" value="1"/>
</dbReference>
<name>HSP90_ASPFU</name>
<sequence length="706" mass="80640">MSSETFEFQAEISQLLSLIINTVYSNKEIFLRELISNASDALDKIRYQSLSDPTKLDTGKDLRIDIIPDKENKTLTIRDTGIGMTKADLINNLGTIARSGTKQFMEALSAGADISMIGQFGVGFYSAYLVADRVTVVSKNNDDEQYIWESAAGGTFTLTQDTEGEQLGRGTKIILHLKDEQTDYLNESRIKEVVRKHSEFISYPIYLHVLKETEKEVPDEEAEETKEEEDEEKKAKIEEVDDEEEEEKKKKKKTKTVKESKIEEEELNKTKPIWTRNPADITQEEYASFYKSLSNDWEDHLAVKHFSVEGQLEFRAILYVPKRAPFDLFETKKTKNNIKLYVRRVFITDDATDLIPEWLGFIKGVVDSEDLPLNLSRETLQQNKIMKVIKKNIVKKTLELFNEIAEDREQFDKFYSAFSKNIKLGIHEDAQNRQTLAKLLRYQSTKSGDEATSLADYVTRMPEHQKQIYYITGESIKAVAKSPFLDSLKQKNFEVLFLVDPIDEYAFTQLKEFDGKKLVDITKDFELEETEEEKAEREKEEKEYENLAKSLKNILGDKVEKVVVSHKLVGSPCAIRTGQFGWSANMERIMKAQALRDTSMSSYMSSKKTFEISPKSSIIKELKKKVEADGENDRTVKSITQLLFETSLLVSGFTIEEPASFAERIHKLVSLGLNIDEEAETTEEKATEEAAPAEATTGESAMEEVD</sequence>
<keyword id="KW-0020">Allergen</keyword>
<keyword id="KW-0067">ATP-binding</keyword>
<keyword id="KW-0143">Chaperone</keyword>
<keyword id="KW-0963">Cytoplasm</keyword>
<keyword id="KW-0547">Nucleotide-binding</keyword>
<keyword id="KW-1185">Reference proteome</keyword>
<keyword id="KW-0346">Stress response</keyword>
<gene>
    <name type="primary">hsp90</name>
    <name type="synonym">hsp1</name>
    <name type="ORF">AFUA_5G04170</name>
</gene>